<proteinExistence type="inferred from homology"/>
<protein>
    <recommendedName>
        <fullName>Ubiquitin-conjugating enzyme E2 S</fullName>
        <ecNumber>2.3.2.23</ecNumber>
    </recommendedName>
    <alternativeName>
        <fullName>E2 ubiquitin-conjugating enzyme S</fullName>
    </alternativeName>
    <alternativeName>
        <fullName>Ubiquitin carrier protein S</fullName>
    </alternativeName>
    <alternativeName>
        <fullName>Ubiquitin-protein ligase S</fullName>
    </alternativeName>
</protein>
<sequence>MSSQYSNVENLSPQTIRQVMRELQEMETTPPEGIKVLINESDVTDIQALIDGPAGTPYAAGIFRVKLTLNKDFPLTPPKAYFLTKIFHPNVAANGEICVNTLKKDWKPDLGIKHILLTIKCLLIVPNPESALNEEAGKMLLERYDDYSQRARMMTEIHAQPAKCGVGATGDAKDDGGPSTKKHAGLDKKLQDKKKEKLLKEKKRMLKRL</sequence>
<dbReference type="EC" id="2.3.2.23"/>
<dbReference type="EMBL" id="CM000366">
    <property type="protein sequence ID" value="EDX18211.1"/>
    <property type="molecule type" value="Genomic_DNA"/>
</dbReference>
<dbReference type="SMR" id="B4R6G1"/>
<dbReference type="STRING" id="7240.B4R6G1"/>
<dbReference type="EnsemblMetazoa" id="FBtr0217253">
    <property type="protein sequence ID" value="FBpp0215745"/>
    <property type="gene ID" value="FBgn0188903"/>
</dbReference>
<dbReference type="EnsemblMetazoa" id="XM_002107195.4">
    <property type="protein sequence ID" value="XP_002107231.1"/>
    <property type="gene ID" value="LOC6726269"/>
</dbReference>
<dbReference type="GeneID" id="6726269"/>
<dbReference type="KEGG" id="dsi:Dsimw501_GD17343"/>
<dbReference type="HOGENOM" id="CLU_030988_5_3_1"/>
<dbReference type="OMA" id="QPAKCGA"/>
<dbReference type="OrthoDB" id="10069349at2759"/>
<dbReference type="PhylomeDB" id="B4R6G1"/>
<dbReference type="UniPathway" id="UPA00143"/>
<dbReference type="Proteomes" id="UP000000304">
    <property type="component" value="Chromosome X"/>
</dbReference>
<dbReference type="Bgee" id="FBgn0188903">
    <property type="expression patterns" value="Expressed in embryo and 3 other cell types or tissues"/>
</dbReference>
<dbReference type="GO" id="GO:0005524">
    <property type="term" value="F:ATP binding"/>
    <property type="evidence" value="ECO:0007669"/>
    <property type="project" value="UniProtKB-KW"/>
</dbReference>
<dbReference type="GO" id="GO:0061631">
    <property type="term" value="F:ubiquitin conjugating enzyme activity"/>
    <property type="evidence" value="ECO:0007669"/>
    <property type="project" value="UniProtKB-EC"/>
</dbReference>
<dbReference type="GO" id="GO:0031145">
    <property type="term" value="P:anaphase-promoting complex-dependent catabolic process"/>
    <property type="evidence" value="ECO:0000250"/>
    <property type="project" value="UniProtKB"/>
</dbReference>
<dbReference type="GO" id="GO:0051301">
    <property type="term" value="P:cell division"/>
    <property type="evidence" value="ECO:0007669"/>
    <property type="project" value="UniProtKB-KW"/>
</dbReference>
<dbReference type="GO" id="GO:0010458">
    <property type="term" value="P:exit from mitosis"/>
    <property type="evidence" value="ECO:0000250"/>
    <property type="project" value="UniProtKB"/>
</dbReference>
<dbReference type="GO" id="GO:0016567">
    <property type="term" value="P:protein ubiquitination"/>
    <property type="evidence" value="ECO:0007669"/>
    <property type="project" value="UniProtKB-UniPathway"/>
</dbReference>
<dbReference type="CDD" id="cd23804">
    <property type="entry name" value="UBCc_UBE2S"/>
    <property type="match status" value="1"/>
</dbReference>
<dbReference type="FunFam" id="3.10.110.10:FF:000034">
    <property type="entry name" value="Ubiquitin-conjugating enzyme E2 S"/>
    <property type="match status" value="1"/>
</dbReference>
<dbReference type="Gene3D" id="3.10.110.10">
    <property type="entry name" value="Ubiquitin Conjugating Enzyme"/>
    <property type="match status" value="1"/>
</dbReference>
<dbReference type="InterPro" id="IPR050113">
    <property type="entry name" value="Ub_conjugating_enzyme"/>
</dbReference>
<dbReference type="InterPro" id="IPR000608">
    <property type="entry name" value="UBQ-conjugat_E2_core"/>
</dbReference>
<dbReference type="InterPro" id="IPR023313">
    <property type="entry name" value="UBQ-conjugating_AS"/>
</dbReference>
<dbReference type="InterPro" id="IPR016135">
    <property type="entry name" value="UBQ-conjugating_enzyme/RWD"/>
</dbReference>
<dbReference type="PANTHER" id="PTHR24067">
    <property type="entry name" value="UBIQUITIN-CONJUGATING ENZYME E2"/>
    <property type="match status" value="1"/>
</dbReference>
<dbReference type="Pfam" id="PF00179">
    <property type="entry name" value="UQ_con"/>
    <property type="match status" value="1"/>
</dbReference>
<dbReference type="SMART" id="SM00212">
    <property type="entry name" value="UBCc"/>
    <property type="match status" value="1"/>
</dbReference>
<dbReference type="SUPFAM" id="SSF54495">
    <property type="entry name" value="UBC-like"/>
    <property type="match status" value="1"/>
</dbReference>
<dbReference type="PROSITE" id="PS00183">
    <property type="entry name" value="UBC_1"/>
    <property type="match status" value="1"/>
</dbReference>
<dbReference type="PROSITE" id="PS50127">
    <property type="entry name" value="UBC_2"/>
    <property type="match status" value="1"/>
</dbReference>
<gene>
    <name type="ORF">GD17343</name>
</gene>
<accession>B4R6G1</accession>
<evidence type="ECO:0000255" key="1">
    <source>
        <dbReference type="PROSITE-ProRule" id="PRU00388"/>
    </source>
</evidence>
<evidence type="ECO:0000255" key="2">
    <source>
        <dbReference type="PROSITE-ProRule" id="PRU10133"/>
    </source>
</evidence>
<evidence type="ECO:0000256" key="3">
    <source>
        <dbReference type="SAM" id="MobiDB-lite"/>
    </source>
</evidence>
<keyword id="KW-0067">ATP-binding</keyword>
<keyword id="KW-0131">Cell cycle</keyword>
<keyword id="KW-0132">Cell division</keyword>
<keyword id="KW-0547">Nucleotide-binding</keyword>
<keyword id="KW-1185">Reference proteome</keyword>
<keyword id="KW-0808">Transferase</keyword>
<keyword id="KW-0833">Ubl conjugation pathway</keyword>
<feature type="chain" id="PRO_0000390445" description="Ubiquitin-conjugating enzyme E2 S">
    <location>
        <begin position="1"/>
        <end position="209"/>
    </location>
</feature>
<feature type="domain" description="UBC core" evidence="1">
    <location>
        <begin position="14"/>
        <end position="160"/>
    </location>
</feature>
<feature type="region of interest" description="Disordered" evidence="3">
    <location>
        <begin position="165"/>
        <end position="209"/>
    </location>
</feature>
<feature type="compositionally biased region" description="Basic and acidic residues" evidence="3">
    <location>
        <begin position="184"/>
        <end position="199"/>
    </location>
</feature>
<feature type="compositionally biased region" description="Basic residues" evidence="3">
    <location>
        <begin position="200"/>
        <end position="209"/>
    </location>
</feature>
<feature type="active site" description="Glycyl thioester intermediate" evidence="1 2">
    <location>
        <position position="98"/>
    </location>
</feature>
<organism>
    <name type="scientific">Drosophila simulans</name>
    <name type="common">Fruit fly</name>
    <dbReference type="NCBI Taxonomy" id="7240"/>
    <lineage>
        <taxon>Eukaryota</taxon>
        <taxon>Metazoa</taxon>
        <taxon>Ecdysozoa</taxon>
        <taxon>Arthropoda</taxon>
        <taxon>Hexapoda</taxon>
        <taxon>Insecta</taxon>
        <taxon>Pterygota</taxon>
        <taxon>Neoptera</taxon>
        <taxon>Endopterygota</taxon>
        <taxon>Diptera</taxon>
        <taxon>Brachycera</taxon>
        <taxon>Muscomorpha</taxon>
        <taxon>Ephydroidea</taxon>
        <taxon>Drosophilidae</taxon>
        <taxon>Drosophila</taxon>
        <taxon>Sophophora</taxon>
    </lineage>
</organism>
<comment type="function">
    <text evidence="1">Catalyzes the covalent attachment of ubiquitin to other proteins. Acts as an essential factor of the anaphase promoting complex/cyclosome (APC/C), a cell cycle-regulated ubiquitin ligase that controls progression through mitosis. Acts by specifically elongating polyubiquitin chains initiated by the E2 enzyme vih/UbcH10 on APC/C substrates, enhancing the degradation of APC/C substrates by the proteasome and promoting mitotic exit.</text>
</comment>
<comment type="catalytic activity">
    <reaction evidence="1 2">
        <text>S-ubiquitinyl-[E1 ubiquitin-activating enzyme]-L-cysteine + [E2 ubiquitin-conjugating enzyme]-L-cysteine = [E1 ubiquitin-activating enzyme]-L-cysteine + S-ubiquitinyl-[E2 ubiquitin-conjugating enzyme]-L-cysteine.</text>
        <dbReference type="EC" id="2.3.2.23"/>
    </reaction>
</comment>
<comment type="pathway">
    <text evidence="1">Protein modification; protein ubiquitination.</text>
</comment>
<comment type="similarity">
    <text evidence="1">Belongs to the ubiquitin-conjugating enzyme family.</text>
</comment>
<reference key="1">
    <citation type="journal article" date="2007" name="Nature">
        <title>Evolution of genes and genomes on the Drosophila phylogeny.</title>
        <authorList>
            <consortium name="Drosophila 12 genomes consortium"/>
        </authorList>
    </citation>
    <scope>NUCLEOTIDE SEQUENCE [LARGE SCALE GENOMIC DNA]</scope>
</reference>
<name>UBE2S_DROSI</name>